<accession>A7NCY0</accession>
<gene>
    <name evidence="1" type="primary">fmt</name>
    <name type="ordered locus">FTA_1358</name>
</gene>
<evidence type="ECO:0000255" key="1">
    <source>
        <dbReference type="HAMAP-Rule" id="MF_00182"/>
    </source>
</evidence>
<dbReference type="EC" id="2.1.2.9" evidence="1"/>
<dbReference type="EMBL" id="CP000803">
    <property type="protein sequence ID" value="ABU61833.1"/>
    <property type="molecule type" value="Genomic_DNA"/>
</dbReference>
<dbReference type="RefSeq" id="WP_003016443.1">
    <property type="nucleotide sequence ID" value="NC_009749.1"/>
</dbReference>
<dbReference type="SMR" id="A7NCY0"/>
<dbReference type="KEGG" id="fta:FTA_1358"/>
<dbReference type="HOGENOM" id="CLU_033347_1_2_6"/>
<dbReference type="GO" id="GO:0005829">
    <property type="term" value="C:cytosol"/>
    <property type="evidence" value="ECO:0007669"/>
    <property type="project" value="TreeGrafter"/>
</dbReference>
<dbReference type="GO" id="GO:0004479">
    <property type="term" value="F:methionyl-tRNA formyltransferase activity"/>
    <property type="evidence" value="ECO:0007669"/>
    <property type="project" value="UniProtKB-UniRule"/>
</dbReference>
<dbReference type="CDD" id="cd08646">
    <property type="entry name" value="FMT_core_Met-tRNA-FMT_N"/>
    <property type="match status" value="1"/>
</dbReference>
<dbReference type="CDD" id="cd08704">
    <property type="entry name" value="Met_tRNA_FMT_C"/>
    <property type="match status" value="1"/>
</dbReference>
<dbReference type="Gene3D" id="3.40.50.12230">
    <property type="match status" value="1"/>
</dbReference>
<dbReference type="HAMAP" id="MF_00182">
    <property type="entry name" value="Formyl_trans"/>
    <property type="match status" value="1"/>
</dbReference>
<dbReference type="InterPro" id="IPR005794">
    <property type="entry name" value="Fmt"/>
</dbReference>
<dbReference type="InterPro" id="IPR005793">
    <property type="entry name" value="Formyl_trans_C"/>
</dbReference>
<dbReference type="InterPro" id="IPR002376">
    <property type="entry name" value="Formyl_transf_N"/>
</dbReference>
<dbReference type="InterPro" id="IPR036477">
    <property type="entry name" value="Formyl_transf_N_sf"/>
</dbReference>
<dbReference type="InterPro" id="IPR011034">
    <property type="entry name" value="Formyl_transferase-like_C_sf"/>
</dbReference>
<dbReference type="InterPro" id="IPR001555">
    <property type="entry name" value="GART_AS"/>
</dbReference>
<dbReference type="InterPro" id="IPR044135">
    <property type="entry name" value="Met-tRNA-FMT_C"/>
</dbReference>
<dbReference type="InterPro" id="IPR041711">
    <property type="entry name" value="Met-tRNA-FMT_N"/>
</dbReference>
<dbReference type="NCBIfam" id="TIGR00460">
    <property type="entry name" value="fmt"/>
    <property type="match status" value="1"/>
</dbReference>
<dbReference type="PANTHER" id="PTHR11138">
    <property type="entry name" value="METHIONYL-TRNA FORMYLTRANSFERASE"/>
    <property type="match status" value="1"/>
</dbReference>
<dbReference type="PANTHER" id="PTHR11138:SF5">
    <property type="entry name" value="METHIONYL-TRNA FORMYLTRANSFERASE, MITOCHONDRIAL"/>
    <property type="match status" value="1"/>
</dbReference>
<dbReference type="Pfam" id="PF02911">
    <property type="entry name" value="Formyl_trans_C"/>
    <property type="match status" value="1"/>
</dbReference>
<dbReference type="Pfam" id="PF00551">
    <property type="entry name" value="Formyl_trans_N"/>
    <property type="match status" value="1"/>
</dbReference>
<dbReference type="SUPFAM" id="SSF50486">
    <property type="entry name" value="FMT C-terminal domain-like"/>
    <property type="match status" value="1"/>
</dbReference>
<dbReference type="SUPFAM" id="SSF53328">
    <property type="entry name" value="Formyltransferase"/>
    <property type="match status" value="1"/>
</dbReference>
<dbReference type="PROSITE" id="PS00373">
    <property type="entry name" value="GART"/>
    <property type="match status" value="1"/>
</dbReference>
<protein>
    <recommendedName>
        <fullName evidence="1">Methionyl-tRNA formyltransferase</fullName>
        <ecNumber evidence="1">2.1.2.9</ecNumber>
    </recommendedName>
</protein>
<keyword id="KW-0648">Protein biosynthesis</keyword>
<keyword id="KW-0808">Transferase</keyword>
<comment type="function">
    <text evidence="1">Attaches a formyl group to the free amino group of methionyl-tRNA(fMet). The formyl group appears to play a dual role in the initiator identity of N-formylmethionyl-tRNA by promoting its recognition by IF2 and preventing the misappropriation of this tRNA by the elongation apparatus.</text>
</comment>
<comment type="catalytic activity">
    <reaction evidence="1">
        <text>L-methionyl-tRNA(fMet) + (6R)-10-formyltetrahydrofolate = N-formyl-L-methionyl-tRNA(fMet) + (6S)-5,6,7,8-tetrahydrofolate + H(+)</text>
        <dbReference type="Rhea" id="RHEA:24380"/>
        <dbReference type="Rhea" id="RHEA-COMP:9952"/>
        <dbReference type="Rhea" id="RHEA-COMP:9953"/>
        <dbReference type="ChEBI" id="CHEBI:15378"/>
        <dbReference type="ChEBI" id="CHEBI:57453"/>
        <dbReference type="ChEBI" id="CHEBI:78530"/>
        <dbReference type="ChEBI" id="CHEBI:78844"/>
        <dbReference type="ChEBI" id="CHEBI:195366"/>
        <dbReference type="EC" id="2.1.2.9"/>
    </reaction>
</comment>
<comment type="similarity">
    <text evidence="1">Belongs to the Fmt family.</text>
</comment>
<reference key="1">
    <citation type="journal article" date="2009" name="PLoS ONE">
        <title>Complete genome sequence of Francisella tularensis subspecies holarctica FTNF002-00.</title>
        <authorList>
            <person name="Barabote R.D."/>
            <person name="Xie G."/>
            <person name="Brettin T.S."/>
            <person name="Hinrichs S.H."/>
            <person name="Fey P.D."/>
            <person name="Jay J.J."/>
            <person name="Engle J.L."/>
            <person name="Godbole S.D."/>
            <person name="Noronha J.M."/>
            <person name="Scheuermann R.H."/>
            <person name="Zhou L.W."/>
            <person name="Lion C."/>
            <person name="Dempsey M.P."/>
        </authorList>
    </citation>
    <scope>NUCLEOTIDE SEQUENCE [LARGE SCALE GENOMIC DNA]</scope>
    <source>
        <strain>FTNF002-00 / FTA</strain>
    </source>
</reference>
<proteinExistence type="inferred from homology"/>
<sequence>MKKLNIIFAGTPDISAQVLKDLYKSQHNIQAVLTQPDRAKGRGKKVQFSPVKEVALANHTPVFQPLSFKKNPEVLEQIKQLKPDVIVVIAYGIIVPQEFLDIPRYGCLNIHVSLLPKWRGAAPIQRAIQAGDTKTGVCIMQMDAGLDTGDILNTLEIEIQETDTSQTLHDKFAKLSIKPLLETLEKIEIIKPEPQQGEPTYAHKITKQEGLIDFTKSAWRISCHIRAFTPWPGAYFILDDEAIKVGEFEILYQNTDNRKAGTIIDIYRSGFDIATSDKIIRFRQLQFPNKKMLNIVDILNGKDLDKYIGYKLG</sequence>
<name>FMT_FRATF</name>
<organism>
    <name type="scientific">Francisella tularensis subsp. holarctica (strain FTNF002-00 / FTA)</name>
    <dbReference type="NCBI Taxonomy" id="458234"/>
    <lineage>
        <taxon>Bacteria</taxon>
        <taxon>Pseudomonadati</taxon>
        <taxon>Pseudomonadota</taxon>
        <taxon>Gammaproteobacteria</taxon>
        <taxon>Thiotrichales</taxon>
        <taxon>Francisellaceae</taxon>
        <taxon>Francisella</taxon>
    </lineage>
</organism>
<feature type="chain" id="PRO_1000020064" description="Methionyl-tRNA formyltransferase">
    <location>
        <begin position="1"/>
        <end position="313"/>
    </location>
</feature>
<feature type="binding site" evidence="1">
    <location>
        <begin position="113"/>
        <end position="116"/>
    </location>
    <ligand>
        <name>(6S)-5,6,7,8-tetrahydrofolate</name>
        <dbReference type="ChEBI" id="CHEBI:57453"/>
    </ligand>
</feature>